<feature type="chain" id="PRO_1000144538" description="Large ribosomal subunit protein uL23">
    <location>
        <begin position="1"/>
        <end position="104"/>
    </location>
</feature>
<accession>B1YRD2</accession>
<dbReference type="EMBL" id="CP001025">
    <property type="protein sequence ID" value="ACB62779.1"/>
    <property type="molecule type" value="Genomic_DNA"/>
</dbReference>
<dbReference type="RefSeq" id="WP_004199275.1">
    <property type="nucleotide sequence ID" value="NC_010551.1"/>
</dbReference>
<dbReference type="SMR" id="B1YRD2"/>
<dbReference type="GeneID" id="98107158"/>
<dbReference type="KEGG" id="bac:BamMC406_0278"/>
<dbReference type="HOGENOM" id="CLU_037562_3_1_4"/>
<dbReference type="OrthoDB" id="9793353at2"/>
<dbReference type="Proteomes" id="UP000001680">
    <property type="component" value="Chromosome 1"/>
</dbReference>
<dbReference type="GO" id="GO:1990904">
    <property type="term" value="C:ribonucleoprotein complex"/>
    <property type="evidence" value="ECO:0007669"/>
    <property type="project" value="UniProtKB-KW"/>
</dbReference>
<dbReference type="GO" id="GO:0005840">
    <property type="term" value="C:ribosome"/>
    <property type="evidence" value="ECO:0007669"/>
    <property type="project" value="UniProtKB-KW"/>
</dbReference>
<dbReference type="GO" id="GO:0019843">
    <property type="term" value="F:rRNA binding"/>
    <property type="evidence" value="ECO:0007669"/>
    <property type="project" value="UniProtKB-UniRule"/>
</dbReference>
<dbReference type="GO" id="GO:0003735">
    <property type="term" value="F:structural constituent of ribosome"/>
    <property type="evidence" value="ECO:0007669"/>
    <property type="project" value="InterPro"/>
</dbReference>
<dbReference type="GO" id="GO:0006412">
    <property type="term" value="P:translation"/>
    <property type="evidence" value="ECO:0007669"/>
    <property type="project" value="UniProtKB-UniRule"/>
</dbReference>
<dbReference type="FunFam" id="3.30.70.330:FF:000001">
    <property type="entry name" value="50S ribosomal protein L23"/>
    <property type="match status" value="1"/>
</dbReference>
<dbReference type="Gene3D" id="3.30.70.330">
    <property type="match status" value="1"/>
</dbReference>
<dbReference type="HAMAP" id="MF_01369_B">
    <property type="entry name" value="Ribosomal_uL23_B"/>
    <property type="match status" value="1"/>
</dbReference>
<dbReference type="InterPro" id="IPR012677">
    <property type="entry name" value="Nucleotide-bd_a/b_plait_sf"/>
</dbReference>
<dbReference type="InterPro" id="IPR013025">
    <property type="entry name" value="Ribosomal_uL23-like"/>
</dbReference>
<dbReference type="InterPro" id="IPR012678">
    <property type="entry name" value="Ribosomal_uL23/eL15/eS24_sf"/>
</dbReference>
<dbReference type="NCBIfam" id="NF004359">
    <property type="entry name" value="PRK05738.1-3"/>
    <property type="match status" value="1"/>
</dbReference>
<dbReference type="NCBIfam" id="NF004363">
    <property type="entry name" value="PRK05738.2-4"/>
    <property type="match status" value="1"/>
</dbReference>
<dbReference type="PANTHER" id="PTHR11620">
    <property type="entry name" value="60S RIBOSOMAL PROTEIN L23A"/>
    <property type="match status" value="1"/>
</dbReference>
<dbReference type="Pfam" id="PF00276">
    <property type="entry name" value="Ribosomal_L23"/>
    <property type="match status" value="1"/>
</dbReference>
<dbReference type="SUPFAM" id="SSF54189">
    <property type="entry name" value="Ribosomal proteins S24e, L23 and L15e"/>
    <property type="match status" value="1"/>
</dbReference>
<keyword id="KW-0687">Ribonucleoprotein</keyword>
<keyword id="KW-0689">Ribosomal protein</keyword>
<keyword id="KW-0694">RNA-binding</keyword>
<keyword id="KW-0699">rRNA-binding</keyword>
<reference key="1">
    <citation type="submission" date="2008-04" db="EMBL/GenBank/DDBJ databases">
        <title>Complete sequence of chromosome 1 of Burkholderia ambifaria MC40-6.</title>
        <authorList>
            <person name="Copeland A."/>
            <person name="Lucas S."/>
            <person name="Lapidus A."/>
            <person name="Glavina del Rio T."/>
            <person name="Dalin E."/>
            <person name="Tice H."/>
            <person name="Pitluck S."/>
            <person name="Chain P."/>
            <person name="Malfatti S."/>
            <person name="Shin M."/>
            <person name="Vergez L."/>
            <person name="Lang D."/>
            <person name="Schmutz J."/>
            <person name="Larimer F."/>
            <person name="Land M."/>
            <person name="Hauser L."/>
            <person name="Kyrpides N."/>
            <person name="Lykidis A."/>
            <person name="Ramette A."/>
            <person name="Konstantinidis K."/>
            <person name="Tiedje J."/>
            <person name="Richardson P."/>
        </authorList>
    </citation>
    <scope>NUCLEOTIDE SEQUENCE [LARGE SCALE GENOMIC DNA]</scope>
    <source>
        <strain>MC40-6</strain>
    </source>
</reference>
<name>RL23_BURA4</name>
<comment type="function">
    <text evidence="1">One of the early assembly proteins it binds 23S rRNA. One of the proteins that surrounds the polypeptide exit tunnel on the outside of the ribosome. Forms the main docking site for trigger factor binding to the ribosome.</text>
</comment>
<comment type="subunit">
    <text evidence="1">Part of the 50S ribosomal subunit. Contacts protein L29, and trigger factor when it is bound to the ribosome.</text>
</comment>
<comment type="similarity">
    <text evidence="1">Belongs to the universal ribosomal protein uL23 family.</text>
</comment>
<protein>
    <recommendedName>
        <fullName evidence="1">Large ribosomal subunit protein uL23</fullName>
    </recommendedName>
    <alternativeName>
        <fullName evidence="2">50S ribosomal protein L23</fullName>
    </alternativeName>
</protein>
<gene>
    <name evidence="1" type="primary">rplW</name>
    <name type="ordered locus">BamMC406_0278</name>
</gene>
<organism>
    <name type="scientific">Burkholderia ambifaria (strain MC40-6)</name>
    <dbReference type="NCBI Taxonomy" id="398577"/>
    <lineage>
        <taxon>Bacteria</taxon>
        <taxon>Pseudomonadati</taxon>
        <taxon>Pseudomonadota</taxon>
        <taxon>Betaproteobacteria</taxon>
        <taxon>Burkholderiales</taxon>
        <taxon>Burkholderiaceae</taxon>
        <taxon>Burkholderia</taxon>
        <taxon>Burkholderia cepacia complex</taxon>
    </lineage>
</organism>
<sequence length="104" mass="11740">MSEIRKNDHRLMQVLLAPVISEKATLVADKNEQVVFEVAPDATKQEVKAAVELLFKVEVDSVNVLVQKGKQKRFGRSMGRRKDVKKAYVCLKPGQEINFEAEAK</sequence>
<evidence type="ECO:0000255" key="1">
    <source>
        <dbReference type="HAMAP-Rule" id="MF_01369"/>
    </source>
</evidence>
<evidence type="ECO:0000305" key="2"/>
<proteinExistence type="inferred from homology"/>